<gene>
    <name type="primary">EGD1</name>
    <name type="ORF">SCY_5688</name>
</gene>
<dbReference type="EMBL" id="AAFW02000135">
    <property type="protein sequence ID" value="EDN61103.1"/>
    <property type="molecule type" value="Genomic_DNA"/>
</dbReference>
<dbReference type="SMR" id="A6ZWL1"/>
<dbReference type="HOGENOM" id="CLU_098726_2_2_1"/>
<dbReference type="Proteomes" id="UP000007060">
    <property type="component" value="Unassembled WGS sequence"/>
</dbReference>
<dbReference type="GO" id="GO:0005737">
    <property type="term" value="C:cytoplasm"/>
    <property type="evidence" value="ECO:0007669"/>
    <property type="project" value="UniProtKB-SubCell"/>
</dbReference>
<dbReference type="GO" id="GO:0005634">
    <property type="term" value="C:nucleus"/>
    <property type="evidence" value="ECO:0007669"/>
    <property type="project" value="UniProtKB-SubCell"/>
</dbReference>
<dbReference type="GO" id="GO:0015031">
    <property type="term" value="P:protein transport"/>
    <property type="evidence" value="ECO:0007669"/>
    <property type="project" value="UniProtKB-KW"/>
</dbReference>
<dbReference type="CDD" id="cd22055">
    <property type="entry name" value="NAC_BTF3"/>
    <property type="match status" value="1"/>
</dbReference>
<dbReference type="FunFam" id="2.20.70.30:FF:000001">
    <property type="entry name" value="Transcription factor BTF3 homolog"/>
    <property type="match status" value="1"/>
</dbReference>
<dbReference type="Gene3D" id="2.20.70.30">
    <property type="entry name" value="Nascent polypeptide-associated complex domain"/>
    <property type="match status" value="1"/>
</dbReference>
<dbReference type="InterPro" id="IPR039370">
    <property type="entry name" value="BTF3"/>
</dbReference>
<dbReference type="InterPro" id="IPR038187">
    <property type="entry name" value="NAC_A/B_dom_sf"/>
</dbReference>
<dbReference type="InterPro" id="IPR002715">
    <property type="entry name" value="Nas_poly-pep-assoc_cplx_dom"/>
</dbReference>
<dbReference type="PANTHER" id="PTHR10351">
    <property type="entry name" value="TRANSCRIPTION FACTOR BTF3 FAMILY MEMBER"/>
    <property type="match status" value="1"/>
</dbReference>
<dbReference type="Pfam" id="PF01849">
    <property type="entry name" value="NAC"/>
    <property type="match status" value="1"/>
</dbReference>
<dbReference type="SMART" id="SM01407">
    <property type="entry name" value="NAC"/>
    <property type="match status" value="1"/>
</dbReference>
<dbReference type="PROSITE" id="PS51151">
    <property type="entry name" value="NAC_AB"/>
    <property type="match status" value="1"/>
</dbReference>
<name>NACB1_YEAS7</name>
<sequence length="157" mass="17020">MPIDQEKLAKLQKLSANNKVGGTRRKLNKKAGSSAGANKDDTKLQSQLAKLHAVTIDNVAEANFFKDDGKVMHFNKVGVQVAAQHNTSVFYGLPQEKNLQDLFPGIISQLGPEAIQALSQLAAQMEKHEAKAPADAEKKDEAIPELVEGQTFDADVE</sequence>
<reference key="1">
    <citation type="journal article" date="2007" name="Proc. Natl. Acad. Sci. U.S.A.">
        <title>Genome sequencing and comparative analysis of Saccharomyces cerevisiae strain YJM789.</title>
        <authorList>
            <person name="Wei W."/>
            <person name="McCusker J.H."/>
            <person name="Hyman R.W."/>
            <person name="Jones T."/>
            <person name="Ning Y."/>
            <person name="Cao Z."/>
            <person name="Gu Z."/>
            <person name="Bruno D."/>
            <person name="Miranda M."/>
            <person name="Nguyen M."/>
            <person name="Wilhelmy J."/>
            <person name="Komp C."/>
            <person name="Tamse R."/>
            <person name="Wang X."/>
            <person name="Jia P."/>
            <person name="Luedi P."/>
            <person name="Oefner P.J."/>
            <person name="David L."/>
            <person name="Dietrich F.S."/>
            <person name="Li Y."/>
            <person name="Davis R.W."/>
            <person name="Steinmetz L.M."/>
        </authorList>
    </citation>
    <scope>NUCLEOTIDE SEQUENCE [LARGE SCALE GENOMIC DNA]</scope>
    <source>
        <strain>YJM789</strain>
    </source>
</reference>
<accession>A6ZWL1</accession>
<organism>
    <name type="scientific">Saccharomyces cerevisiae (strain YJM789)</name>
    <name type="common">Baker's yeast</name>
    <dbReference type="NCBI Taxonomy" id="307796"/>
    <lineage>
        <taxon>Eukaryota</taxon>
        <taxon>Fungi</taxon>
        <taxon>Dikarya</taxon>
        <taxon>Ascomycota</taxon>
        <taxon>Saccharomycotina</taxon>
        <taxon>Saccharomycetes</taxon>
        <taxon>Saccharomycetales</taxon>
        <taxon>Saccharomycetaceae</taxon>
        <taxon>Saccharomyces</taxon>
    </lineage>
</organism>
<evidence type="ECO:0000250" key="1"/>
<evidence type="ECO:0000250" key="2">
    <source>
        <dbReference type="UniProtKB" id="Q02642"/>
    </source>
</evidence>
<evidence type="ECO:0000255" key="3">
    <source>
        <dbReference type="PROSITE-ProRule" id="PRU00507"/>
    </source>
</evidence>
<evidence type="ECO:0000256" key="4">
    <source>
        <dbReference type="SAM" id="MobiDB-lite"/>
    </source>
</evidence>
<evidence type="ECO:0000305" key="5"/>
<feature type="chain" id="PRO_0000310168" description="Nascent polypeptide-associated complex subunit beta-1">
    <location>
        <begin position="1"/>
        <end position="157"/>
    </location>
</feature>
<feature type="domain" description="NAC-A/B" evidence="3">
    <location>
        <begin position="38"/>
        <end position="103"/>
    </location>
</feature>
<feature type="region of interest" description="Disordered" evidence="4">
    <location>
        <begin position="19"/>
        <end position="42"/>
    </location>
</feature>
<feature type="region of interest" description="Disordered" evidence="4">
    <location>
        <begin position="126"/>
        <end position="157"/>
    </location>
</feature>
<feature type="compositionally biased region" description="Basic and acidic residues" evidence="4">
    <location>
        <begin position="126"/>
        <end position="142"/>
    </location>
</feature>
<feature type="modified residue" description="Phosphothreonine" evidence="2">
    <location>
        <position position="151"/>
    </location>
</feature>
<keyword id="KW-0963">Cytoplasm</keyword>
<keyword id="KW-0539">Nucleus</keyword>
<keyword id="KW-0597">Phosphoprotein</keyword>
<keyword id="KW-0653">Protein transport</keyword>
<keyword id="KW-0678">Repressor</keyword>
<keyword id="KW-0804">Transcription</keyword>
<keyword id="KW-0805">Transcription regulation</keyword>
<keyword id="KW-0813">Transport</keyword>
<protein>
    <recommendedName>
        <fullName>Nascent polypeptide-associated complex subunit beta-1</fullName>
        <shortName>NAC-beta-1</shortName>
    </recommendedName>
    <alternativeName>
        <fullName>BTF3 homolog EGD1</fullName>
    </alternativeName>
    <alternativeName>
        <fullName>Beta-1-NAC</fullName>
    </alternativeName>
    <alternativeName>
        <fullName>GAL4 DNA-binding enhancer protein 1</fullName>
    </alternativeName>
</protein>
<comment type="function">
    <text evidence="1">Component of the nascent polypeptide-associated complex (NAC), a dynamic component of the ribosomal exit tunnel, protecting the emerging polypeptides from interaction with other cytoplasmic proteins to ensure appropriate nascent protein targeting. The NAC complex also promotes mitochondrial protein import by enhancing productive ribosome interactions with the outer mitochondrial membrane and blocks the inappropriate interaction of ribosomes translating non-secretory nascent polypeptides with translocation sites in the membrane of the endoplasmic reticulum. EGD1 may act as a transcription factor that exert a negative effect on the expression of several genes that are transcribed by RNA polymerase II.</text>
</comment>
<comment type="subunit">
    <text evidence="1">Part of the nascent polypeptide-associated complex (NAC), consisting of EGD2 and either EGD1 or BTT1. NAC associates with ribosomes via EGD1 or BTT1, and with the CCR4-NOT complex (By similarity).</text>
</comment>
<comment type="subcellular location">
    <subcellularLocation>
        <location evidence="1">Cytoplasm</location>
    </subcellularLocation>
    <subcellularLocation>
        <location evidence="1">Nucleus</location>
    </subcellularLocation>
    <text evidence="1">Predominantly cytoplasmic, may also transiently localize to the nucleus.</text>
</comment>
<comment type="similarity">
    <text evidence="5">Belongs to the NAC-beta family.</text>
</comment>
<proteinExistence type="inferred from homology"/>